<dbReference type="EC" id="7.1.1.2"/>
<dbReference type="EMBL" id="U62532">
    <property type="protein sequence ID" value="AAC60306.1"/>
    <property type="molecule type" value="Genomic_DNA"/>
</dbReference>
<dbReference type="PIR" id="T11455">
    <property type="entry name" value="T11455"/>
</dbReference>
<dbReference type="RefSeq" id="NP_008317.1">
    <property type="nucleotide sequence ID" value="NC_001778.1"/>
</dbReference>
<dbReference type="SMR" id="Q95910"/>
<dbReference type="GeneID" id="808037"/>
<dbReference type="CTD" id="4536"/>
<dbReference type="GO" id="GO:0005743">
    <property type="term" value="C:mitochondrial inner membrane"/>
    <property type="evidence" value="ECO:0007669"/>
    <property type="project" value="UniProtKB-SubCell"/>
</dbReference>
<dbReference type="GO" id="GO:0008137">
    <property type="term" value="F:NADH dehydrogenase (ubiquinone) activity"/>
    <property type="evidence" value="ECO:0007669"/>
    <property type="project" value="UniProtKB-EC"/>
</dbReference>
<dbReference type="GO" id="GO:0006120">
    <property type="term" value="P:mitochondrial electron transport, NADH to ubiquinone"/>
    <property type="evidence" value="ECO:0007669"/>
    <property type="project" value="InterPro"/>
</dbReference>
<dbReference type="InterPro" id="IPR050175">
    <property type="entry name" value="Complex_I_Subunit_2"/>
</dbReference>
<dbReference type="InterPro" id="IPR010933">
    <property type="entry name" value="NADH_DH_su2_C"/>
</dbReference>
<dbReference type="InterPro" id="IPR003917">
    <property type="entry name" value="NADH_UbQ_OxRdtase_chain2"/>
</dbReference>
<dbReference type="InterPro" id="IPR001750">
    <property type="entry name" value="ND/Mrp_TM"/>
</dbReference>
<dbReference type="PANTHER" id="PTHR46552">
    <property type="entry name" value="NADH-UBIQUINONE OXIDOREDUCTASE CHAIN 2"/>
    <property type="match status" value="1"/>
</dbReference>
<dbReference type="PANTHER" id="PTHR46552:SF1">
    <property type="entry name" value="NADH-UBIQUINONE OXIDOREDUCTASE CHAIN 2"/>
    <property type="match status" value="1"/>
</dbReference>
<dbReference type="Pfam" id="PF06444">
    <property type="entry name" value="NADH_dehy_S2_C"/>
    <property type="match status" value="1"/>
</dbReference>
<dbReference type="Pfam" id="PF00361">
    <property type="entry name" value="Proton_antipo_M"/>
    <property type="match status" value="1"/>
</dbReference>
<dbReference type="PRINTS" id="PR01436">
    <property type="entry name" value="NADHDHGNASE2"/>
</dbReference>
<reference key="1">
    <citation type="journal article" date="1996" name="Genetics">
        <title>The complete mitochondrial DNA sequence of the bichir (Polypterus ornatipinnis), a basal ray-finned fish: ancient establishment of the consensus vertebrate gene order.</title>
        <authorList>
            <person name="Noack K."/>
            <person name="Zardoya R."/>
            <person name="Meyer A."/>
        </authorList>
    </citation>
    <scope>NUCLEOTIDE SEQUENCE [GENOMIC DNA]</scope>
</reference>
<accession>Q95910</accession>
<name>NU2M_POLOR</name>
<keyword id="KW-0249">Electron transport</keyword>
<keyword id="KW-0472">Membrane</keyword>
<keyword id="KW-0496">Mitochondrion</keyword>
<keyword id="KW-0999">Mitochondrion inner membrane</keyword>
<keyword id="KW-0520">NAD</keyword>
<keyword id="KW-0679">Respiratory chain</keyword>
<keyword id="KW-1278">Translocase</keyword>
<keyword id="KW-0812">Transmembrane</keyword>
<keyword id="KW-1133">Transmembrane helix</keyword>
<keyword id="KW-0813">Transport</keyword>
<keyword id="KW-0830">Ubiquinone</keyword>
<sequence length="345" mass="38192">MNPYILSIMLISLGLGTTLTFASSNWLLAWMGLEINTLAIIPLMANNHHPRAVEAATKYFITQAAAAALLLFSSLINAWQSGQWMIQDMSMPMSALMTIAIAIKLGVAPVHFWLPEVMQGIKLNTGLILATWQKLAPLALLYQISNNLMPELMIALGLMSTIVGGWGGLNQTQIRKIMAYSSIAHLGWIISIMHFMPSLAIINLIMYIIMTTTMFMIFNTLNSTTINALAINWSKFPALSAITMLALLSLGGLPPLSGFLPKWLILQELTNQNLALTATVMALSALLSLYFYLRLSYSLTTTIMPNTYQHMLNWNIKTKITFILPTMMIMTIAMLPISPSIISMF</sequence>
<geneLocation type="mitochondrion"/>
<comment type="function">
    <text evidence="1">Core subunit of the mitochondrial membrane respiratory chain NADH dehydrogenase (Complex I) that is believed to belong to the minimal assembly required for catalysis. Complex I functions in the transfer of electrons from NADH to the respiratory chain. The immediate electron acceptor for the enzyme is believed to be ubiquinone (By similarity).</text>
</comment>
<comment type="catalytic activity">
    <reaction>
        <text>a ubiquinone + NADH + 5 H(+)(in) = a ubiquinol + NAD(+) + 4 H(+)(out)</text>
        <dbReference type="Rhea" id="RHEA:29091"/>
        <dbReference type="Rhea" id="RHEA-COMP:9565"/>
        <dbReference type="Rhea" id="RHEA-COMP:9566"/>
        <dbReference type="ChEBI" id="CHEBI:15378"/>
        <dbReference type="ChEBI" id="CHEBI:16389"/>
        <dbReference type="ChEBI" id="CHEBI:17976"/>
        <dbReference type="ChEBI" id="CHEBI:57540"/>
        <dbReference type="ChEBI" id="CHEBI:57945"/>
        <dbReference type="EC" id="7.1.1.2"/>
    </reaction>
</comment>
<comment type="subcellular location">
    <subcellularLocation>
        <location>Mitochondrion inner membrane</location>
        <topology>Multi-pass membrane protein</topology>
    </subcellularLocation>
</comment>
<comment type="similarity">
    <text evidence="3">Belongs to the complex I subunit 2 family.</text>
</comment>
<feature type="chain" id="PRO_0000117628" description="NADH-ubiquinone oxidoreductase chain 2">
    <location>
        <begin position="1"/>
        <end position="345"/>
    </location>
</feature>
<feature type="transmembrane region" description="Helical" evidence="2">
    <location>
        <begin position="3"/>
        <end position="23"/>
    </location>
</feature>
<feature type="transmembrane region" description="Helical" evidence="2">
    <location>
        <begin position="25"/>
        <end position="45"/>
    </location>
</feature>
<feature type="transmembrane region" description="Helical" evidence="2">
    <location>
        <begin position="59"/>
        <end position="79"/>
    </location>
</feature>
<feature type="transmembrane region" description="Helical" evidence="2">
    <location>
        <begin position="95"/>
        <end position="115"/>
    </location>
</feature>
<feature type="transmembrane region" description="Helical" evidence="2">
    <location>
        <begin position="148"/>
        <end position="168"/>
    </location>
</feature>
<feature type="transmembrane region" description="Helical" evidence="2">
    <location>
        <begin position="177"/>
        <end position="196"/>
    </location>
</feature>
<feature type="transmembrane region" description="Helical" evidence="2">
    <location>
        <begin position="201"/>
        <end position="223"/>
    </location>
</feature>
<feature type="transmembrane region" description="Helical" evidence="2">
    <location>
        <begin position="236"/>
        <end position="256"/>
    </location>
</feature>
<feature type="transmembrane region" description="Helical" evidence="2">
    <location>
        <begin position="273"/>
        <end position="293"/>
    </location>
</feature>
<feature type="transmembrane region" description="Helical" evidence="2">
    <location>
        <begin position="322"/>
        <end position="342"/>
    </location>
</feature>
<organism>
    <name type="scientific">Polypterus ornatipinnis</name>
    <name type="common">Ornate bichir</name>
    <dbReference type="NCBI Taxonomy" id="49895"/>
    <lineage>
        <taxon>Eukaryota</taxon>
        <taxon>Metazoa</taxon>
        <taxon>Chordata</taxon>
        <taxon>Craniata</taxon>
        <taxon>Vertebrata</taxon>
        <taxon>Euteleostomi</taxon>
        <taxon>Actinopterygii</taxon>
        <taxon>Polypteriformes</taxon>
        <taxon>Polypteridae</taxon>
        <taxon>Polypterus</taxon>
    </lineage>
</organism>
<evidence type="ECO:0000250" key="1"/>
<evidence type="ECO:0000255" key="2"/>
<evidence type="ECO:0000305" key="3"/>
<proteinExistence type="inferred from homology"/>
<gene>
    <name type="primary">MT-ND2</name>
    <name type="synonym">MTND2</name>
    <name type="synonym">NADH2</name>
    <name type="synonym">ND2</name>
</gene>
<protein>
    <recommendedName>
        <fullName>NADH-ubiquinone oxidoreductase chain 2</fullName>
        <ecNumber>7.1.1.2</ecNumber>
    </recommendedName>
    <alternativeName>
        <fullName>NADH dehydrogenase subunit 2</fullName>
    </alternativeName>
</protein>